<accession>P32808</accession>
<reference key="1">
    <citation type="journal article" date="1990" name="Curr. Genet.">
        <title>The cytochrome oxidase subunit III gene in sunflower mitochondria is cotranscribed with an open reading frame conserved in higher plants.</title>
        <authorList>
            <person name="Quagliariello C."/>
            <person name="Saiardi A."/>
            <person name="Gallerani R."/>
        </authorList>
    </citation>
    <scope>NUCLEOTIDE SEQUENCE [GENOMIC DNA]</scope>
    <source>
        <strain>cv. Gloriasol</strain>
    </source>
</reference>
<organism>
    <name type="scientific">Helianthus annuus</name>
    <name type="common">Common sunflower</name>
    <dbReference type="NCBI Taxonomy" id="4232"/>
    <lineage>
        <taxon>Eukaryota</taxon>
        <taxon>Viridiplantae</taxon>
        <taxon>Streptophyta</taxon>
        <taxon>Embryophyta</taxon>
        <taxon>Tracheophyta</taxon>
        <taxon>Spermatophyta</taxon>
        <taxon>Magnoliopsida</taxon>
        <taxon>eudicotyledons</taxon>
        <taxon>Gunneridae</taxon>
        <taxon>Pentapetalae</taxon>
        <taxon>asterids</taxon>
        <taxon>campanulids</taxon>
        <taxon>Asterales</taxon>
        <taxon>Asteraceae</taxon>
        <taxon>Asteroideae</taxon>
        <taxon>Heliantheae alliance</taxon>
        <taxon>Heliantheae</taxon>
        <taxon>Helianthus</taxon>
    </lineage>
</organism>
<feature type="chain" id="PRO_0000183790" description="Cytochrome c oxidase subunit 3">
    <location>
        <begin position="1"/>
        <end position="265"/>
    </location>
</feature>
<feature type="transmembrane region" description="Helical" evidence="2">
    <location>
        <begin position="16"/>
        <end position="36"/>
    </location>
</feature>
<feature type="transmembrane region" description="Helical" evidence="2">
    <location>
        <begin position="41"/>
        <end position="61"/>
    </location>
</feature>
<feature type="transmembrane region" description="Helical" evidence="2">
    <location>
        <begin position="81"/>
        <end position="101"/>
    </location>
</feature>
<feature type="transmembrane region" description="Helical" evidence="2">
    <location>
        <begin position="162"/>
        <end position="182"/>
    </location>
</feature>
<feature type="transmembrane region" description="Helical" evidence="2">
    <location>
        <begin position="200"/>
        <end position="220"/>
    </location>
</feature>
<feature type="transmembrane region" description="Helical" evidence="2">
    <location>
        <begin position="245"/>
        <end position="265"/>
    </location>
</feature>
<gene>
    <name type="primary">COX3</name>
    <name type="synonym">COXIII</name>
</gene>
<name>COX3_HELAN</name>
<evidence type="ECO:0000250" key="1">
    <source>
        <dbReference type="UniProtKB" id="P00420"/>
    </source>
</evidence>
<evidence type="ECO:0000255" key="2"/>
<evidence type="ECO:0000305" key="3"/>
<dbReference type="EC" id="7.1.1.9"/>
<dbReference type="EMBL" id="X57669">
    <property type="protein sequence ID" value="CAA40865.1"/>
    <property type="molecule type" value="Genomic_DNA"/>
</dbReference>
<dbReference type="PIR" id="S14123">
    <property type="entry name" value="S14123"/>
</dbReference>
<dbReference type="SMR" id="P32808"/>
<dbReference type="GO" id="GO:0005743">
    <property type="term" value="C:mitochondrial inner membrane"/>
    <property type="evidence" value="ECO:0007669"/>
    <property type="project" value="UniProtKB-SubCell"/>
</dbReference>
<dbReference type="GO" id="GO:0004129">
    <property type="term" value="F:cytochrome-c oxidase activity"/>
    <property type="evidence" value="ECO:0007669"/>
    <property type="project" value="UniProtKB-EC"/>
</dbReference>
<dbReference type="GO" id="GO:0019646">
    <property type="term" value="P:aerobic electron transport chain"/>
    <property type="evidence" value="ECO:0007669"/>
    <property type="project" value="InterPro"/>
</dbReference>
<dbReference type="CDD" id="cd01665">
    <property type="entry name" value="Cyt_c_Oxidase_III"/>
    <property type="match status" value="1"/>
</dbReference>
<dbReference type="FunFam" id="1.10.287.70:FF:000075">
    <property type="entry name" value="Cytochrome c oxidase subunit 3"/>
    <property type="match status" value="1"/>
</dbReference>
<dbReference type="FunFam" id="1.20.120.80:FF:000002">
    <property type="entry name" value="Cytochrome c oxidase subunit 3"/>
    <property type="match status" value="1"/>
</dbReference>
<dbReference type="Gene3D" id="1.10.287.70">
    <property type="match status" value="1"/>
</dbReference>
<dbReference type="Gene3D" id="1.20.120.80">
    <property type="entry name" value="Cytochrome c oxidase, subunit III, four-helix bundle"/>
    <property type="match status" value="1"/>
</dbReference>
<dbReference type="InterPro" id="IPR024791">
    <property type="entry name" value="Cyt_c/ubiquinol_Oxase_su3"/>
</dbReference>
<dbReference type="InterPro" id="IPR033945">
    <property type="entry name" value="Cyt_c_oxase_su3_dom"/>
</dbReference>
<dbReference type="InterPro" id="IPR000298">
    <property type="entry name" value="Cyt_c_oxidase-like_su3"/>
</dbReference>
<dbReference type="InterPro" id="IPR035973">
    <property type="entry name" value="Cyt_c_oxidase_su3-like_sf"/>
</dbReference>
<dbReference type="InterPro" id="IPR013833">
    <property type="entry name" value="Cyt_c_oxidase_su3_a-hlx"/>
</dbReference>
<dbReference type="PANTHER" id="PTHR11403:SF7">
    <property type="entry name" value="CYTOCHROME C OXIDASE SUBUNIT 3"/>
    <property type="match status" value="1"/>
</dbReference>
<dbReference type="PANTHER" id="PTHR11403">
    <property type="entry name" value="CYTOCHROME C OXIDASE SUBUNIT III"/>
    <property type="match status" value="1"/>
</dbReference>
<dbReference type="Pfam" id="PF00510">
    <property type="entry name" value="COX3"/>
    <property type="match status" value="1"/>
</dbReference>
<dbReference type="SUPFAM" id="SSF81452">
    <property type="entry name" value="Cytochrome c oxidase subunit III-like"/>
    <property type="match status" value="1"/>
</dbReference>
<dbReference type="PROSITE" id="PS50253">
    <property type="entry name" value="COX3"/>
    <property type="match status" value="1"/>
</dbReference>
<proteinExistence type="inferred from homology"/>
<geneLocation type="mitochondrion"/>
<keyword id="KW-0472">Membrane</keyword>
<keyword id="KW-0496">Mitochondrion</keyword>
<keyword id="KW-0999">Mitochondrion inner membrane</keyword>
<keyword id="KW-1278">Translocase</keyword>
<keyword id="KW-0812">Transmembrane</keyword>
<keyword id="KW-1133">Transmembrane helix</keyword>
<comment type="function">
    <text evidence="1">Component of the cytochrome c oxidase, the last enzyme in the mitochondrial electron transport chain which drives oxidative phosphorylation. The respiratory chain contains 3 multisubunit complexes succinate dehydrogenase (complex II, CII), ubiquinol-cytochrome c oxidoreductase (cytochrome b-c1 complex, complex III, CIII) and cytochrome c oxidase (complex IV, CIV), that cooperate to transfer electrons derived from NADH and succinate to molecular oxygen, creating an electrochemical gradient over the inner membrane that drives transmembrane transport and the ATP synthase. Cytochrome c oxidase is the component of the respiratory chain that catalyzes the reduction of oxygen to water. Electrons originating from reduced cytochrome c in the intermembrane space (IMS) are transferred via the dinuclear copper A center (CU(A)) of subunit 2 and heme A of subunit 1 to the active site in subunit 1, a binuclear center (BNC) formed by heme A3 and copper B (CU(B)). The BNC reduces molecular oxygen to 2 water molecules using 4 electrons from cytochrome c in the IMS and 4 protons from the mitochondrial matrix.</text>
</comment>
<comment type="catalytic activity">
    <reaction evidence="1">
        <text>4 Fe(II)-[cytochrome c] + O2 + 8 H(+)(in) = 4 Fe(III)-[cytochrome c] + 2 H2O + 4 H(+)(out)</text>
        <dbReference type="Rhea" id="RHEA:11436"/>
        <dbReference type="Rhea" id="RHEA-COMP:10350"/>
        <dbReference type="Rhea" id="RHEA-COMP:14399"/>
        <dbReference type="ChEBI" id="CHEBI:15377"/>
        <dbReference type="ChEBI" id="CHEBI:15378"/>
        <dbReference type="ChEBI" id="CHEBI:15379"/>
        <dbReference type="ChEBI" id="CHEBI:29033"/>
        <dbReference type="ChEBI" id="CHEBI:29034"/>
        <dbReference type="EC" id="7.1.1.9"/>
    </reaction>
    <physiologicalReaction direction="left-to-right" evidence="1">
        <dbReference type="Rhea" id="RHEA:11437"/>
    </physiologicalReaction>
</comment>
<comment type="subunit">
    <text evidence="1">Component of the cytochrome c oxidase (complex IV, CIV), a multisubunit enzyme composed of a catalytic core of 3 subunits and several supernumerary subunits. The complex exists as a monomer or a dimer and forms supercomplexes (SCs) in the inner mitochondrial membrane with ubiquinol-cytochrome c oxidoreductase (cytochrome b-c1 complex, complex III, CIII).</text>
</comment>
<comment type="subcellular location">
    <subcellularLocation>
        <location evidence="1">Mitochondrion inner membrane</location>
        <topology evidence="1">Multi-pass membrane protein</topology>
    </subcellularLocation>
</comment>
<comment type="similarity">
    <text evidence="3">Belongs to the cytochrome c oxidase subunit 3 family.</text>
</comment>
<protein>
    <recommendedName>
        <fullName>Cytochrome c oxidase subunit 3</fullName>
        <ecNumber>7.1.1.9</ecNumber>
    </recommendedName>
    <alternativeName>
        <fullName>Cytochrome c oxidase polypeptide III</fullName>
    </alternativeName>
</protein>
<sequence>MIESQRHSYHLVDPSPWPISGSLGALATTVGGVMYMHSFQGGATLLSLGLIFILYTMFVWWRDVLRESTLEGHHTKVVQLGPRYGFILFIVSEVMFLFALFRASSHSSLAPTVEIGGIWPPKGIAVLDPREIPFLNTPIPLSSGAAVTWAHHAILAGKEKRAVYALVATVSLALVFTAFQGMEYYQAPSTISDSIYGSTFFLATGFHGFHVIIGTLFSIVCGIRQYLGHLTKEHHVGFEAAAWYWHFVDVVRLFPFVSIYWWGGI</sequence>